<gene>
    <name evidence="1" type="primary">sthA</name>
    <name evidence="1" type="synonym">udhA</name>
    <name type="ordered locus">YPK_4078</name>
</gene>
<proteinExistence type="inferred from homology"/>
<reference key="1">
    <citation type="submission" date="2008-02" db="EMBL/GenBank/DDBJ databases">
        <title>Complete sequence of Yersinia pseudotuberculosis YPIII.</title>
        <authorList>
            <consortium name="US DOE Joint Genome Institute"/>
            <person name="Copeland A."/>
            <person name="Lucas S."/>
            <person name="Lapidus A."/>
            <person name="Glavina del Rio T."/>
            <person name="Dalin E."/>
            <person name="Tice H."/>
            <person name="Bruce D."/>
            <person name="Goodwin L."/>
            <person name="Pitluck S."/>
            <person name="Munk A.C."/>
            <person name="Brettin T."/>
            <person name="Detter J.C."/>
            <person name="Han C."/>
            <person name="Tapia R."/>
            <person name="Schmutz J."/>
            <person name="Larimer F."/>
            <person name="Land M."/>
            <person name="Hauser L."/>
            <person name="Challacombe J.F."/>
            <person name="Green L."/>
            <person name="Lindler L.E."/>
            <person name="Nikolich M.P."/>
            <person name="Richardson P."/>
        </authorList>
    </citation>
    <scope>NUCLEOTIDE SEQUENCE [LARGE SCALE GENOMIC DNA]</scope>
    <source>
        <strain>YPIII</strain>
    </source>
</reference>
<keyword id="KW-0963">Cytoplasm</keyword>
<keyword id="KW-0274">FAD</keyword>
<keyword id="KW-0285">Flavoprotein</keyword>
<keyword id="KW-0520">NAD</keyword>
<keyword id="KW-0521">NADP</keyword>
<keyword id="KW-0560">Oxidoreductase</keyword>
<feature type="chain" id="PRO_1000100865" description="Soluble pyridine nucleotide transhydrogenase">
    <location>
        <begin position="1"/>
        <end position="466"/>
    </location>
</feature>
<feature type="binding site" evidence="1">
    <location>
        <begin position="36"/>
        <end position="45"/>
    </location>
    <ligand>
        <name>FAD</name>
        <dbReference type="ChEBI" id="CHEBI:57692"/>
    </ligand>
</feature>
<evidence type="ECO:0000255" key="1">
    <source>
        <dbReference type="HAMAP-Rule" id="MF_00247"/>
    </source>
</evidence>
<organism>
    <name type="scientific">Yersinia pseudotuberculosis serotype O:3 (strain YPIII)</name>
    <dbReference type="NCBI Taxonomy" id="502800"/>
    <lineage>
        <taxon>Bacteria</taxon>
        <taxon>Pseudomonadati</taxon>
        <taxon>Pseudomonadota</taxon>
        <taxon>Gammaproteobacteria</taxon>
        <taxon>Enterobacterales</taxon>
        <taxon>Yersiniaceae</taxon>
        <taxon>Yersinia</taxon>
    </lineage>
</organism>
<protein>
    <recommendedName>
        <fullName evidence="1">Soluble pyridine nucleotide transhydrogenase</fullName>
        <shortName evidence="1">STH</shortName>
        <ecNumber evidence="1">1.6.1.1</ecNumber>
    </recommendedName>
    <alternativeName>
        <fullName evidence="1">NAD(P)(+) transhydrogenase [B-specific]</fullName>
    </alternativeName>
</protein>
<sequence>MQQHFHFDAIVIGSGPGGEGAAMGLVKQGARVAVIERYNNVGGGCTHWGTIPSKALRHAVSRIIEFNQNPLYSDNARTIKSSFADILNHADRVINQQTRMRQGFYDRNHCHMFSGDASFIDANTVNVRYADGTSDTLQADNIVIATGSRPYRPVNVDFNHERIYDSDTILQLSHEPQHVIIYGAGVIGCEYASIFRGLSVKVDLINTRDRLLAFLDQEMSDALSYHFWNNGVVIRHNEEFEQIEGTTDGVIVHLKSGKKVKADCLLYANGRTGNTSGLGLENIGLEADSRGLLKVNSMYQTALSHVYAVGDVIGYPSLASAAYDQGRIAAQAMIKGEANVHLIEDIPTGIYTIPEISSVGKTEQELTAMKVPYEVGRAQFKHLARAQIVGMDTGSLKILFHRETKQILGIHCFGERAAEIIHIGQAIMEQKGEGNTLEYFVNTTFNYPTMAEAYRVAALNGLNRLF</sequence>
<dbReference type="EC" id="1.6.1.1" evidence="1"/>
<dbReference type="EMBL" id="CP000950">
    <property type="protein sequence ID" value="ACA70337.1"/>
    <property type="molecule type" value="Genomic_DNA"/>
</dbReference>
<dbReference type="RefSeq" id="WP_002209477.1">
    <property type="nucleotide sequence ID" value="NZ_CP009792.1"/>
</dbReference>
<dbReference type="SMR" id="B1JQ50"/>
<dbReference type="GeneID" id="96663600"/>
<dbReference type="KEGG" id="ypy:YPK_4078"/>
<dbReference type="PATRIC" id="fig|502800.11.peg.426"/>
<dbReference type="GO" id="GO:0005829">
    <property type="term" value="C:cytosol"/>
    <property type="evidence" value="ECO:0007669"/>
    <property type="project" value="TreeGrafter"/>
</dbReference>
<dbReference type="GO" id="GO:0004148">
    <property type="term" value="F:dihydrolipoyl dehydrogenase (NADH) activity"/>
    <property type="evidence" value="ECO:0007669"/>
    <property type="project" value="TreeGrafter"/>
</dbReference>
<dbReference type="GO" id="GO:0050660">
    <property type="term" value="F:flavin adenine dinucleotide binding"/>
    <property type="evidence" value="ECO:0007669"/>
    <property type="project" value="TreeGrafter"/>
</dbReference>
<dbReference type="GO" id="GO:0003957">
    <property type="term" value="F:NAD(P)+ transhydrogenase (Si-specific) activity"/>
    <property type="evidence" value="ECO:0007669"/>
    <property type="project" value="UniProtKB-UniRule"/>
</dbReference>
<dbReference type="GO" id="GO:0006103">
    <property type="term" value="P:2-oxoglutarate metabolic process"/>
    <property type="evidence" value="ECO:0007669"/>
    <property type="project" value="TreeGrafter"/>
</dbReference>
<dbReference type="GO" id="GO:0006739">
    <property type="term" value="P:NADP metabolic process"/>
    <property type="evidence" value="ECO:0007669"/>
    <property type="project" value="UniProtKB-UniRule"/>
</dbReference>
<dbReference type="FunFam" id="3.30.390.30:FF:000002">
    <property type="entry name" value="Soluble pyridine nucleotide transhydrogenase"/>
    <property type="match status" value="1"/>
</dbReference>
<dbReference type="FunFam" id="3.50.50.60:FF:000008">
    <property type="entry name" value="Soluble pyridine nucleotide transhydrogenase"/>
    <property type="match status" value="1"/>
</dbReference>
<dbReference type="Gene3D" id="3.30.390.30">
    <property type="match status" value="1"/>
</dbReference>
<dbReference type="Gene3D" id="3.50.50.60">
    <property type="entry name" value="FAD/NAD(P)-binding domain"/>
    <property type="match status" value="2"/>
</dbReference>
<dbReference type="HAMAP" id="MF_00247">
    <property type="entry name" value="SthA"/>
    <property type="match status" value="1"/>
</dbReference>
<dbReference type="InterPro" id="IPR050151">
    <property type="entry name" value="Class-I_Pyr_Nuc-Dis_Oxidored"/>
</dbReference>
<dbReference type="InterPro" id="IPR036188">
    <property type="entry name" value="FAD/NAD-bd_sf"/>
</dbReference>
<dbReference type="InterPro" id="IPR023753">
    <property type="entry name" value="FAD/NAD-binding_dom"/>
</dbReference>
<dbReference type="InterPro" id="IPR016156">
    <property type="entry name" value="FAD/NAD-linked_Rdtase_dimer_sf"/>
</dbReference>
<dbReference type="InterPro" id="IPR001100">
    <property type="entry name" value="Pyr_nuc-diS_OxRdtase"/>
</dbReference>
<dbReference type="InterPro" id="IPR004099">
    <property type="entry name" value="Pyr_nucl-diS_OxRdtase_dimer"/>
</dbReference>
<dbReference type="InterPro" id="IPR022962">
    <property type="entry name" value="STH_gammaproteobact"/>
</dbReference>
<dbReference type="NCBIfam" id="NF003585">
    <property type="entry name" value="PRK05249.1"/>
    <property type="match status" value="1"/>
</dbReference>
<dbReference type="PANTHER" id="PTHR22912">
    <property type="entry name" value="DISULFIDE OXIDOREDUCTASE"/>
    <property type="match status" value="1"/>
</dbReference>
<dbReference type="PANTHER" id="PTHR22912:SF93">
    <property type="entry name" value="SOLUBLE PYRIDINE NUCLEOTIDE TRANSHYDROGENASE"/>
    <property type="match status" value="1"/>
</dbReference>
<dbReference type="Pfam" id="PF07992">
    <property type="entry name" value="Pyr_redox_2"/>
    <property type="match status" value="1"/>
</dbReference>
<dbReference type="Pfam" id="PF02852">
    <property type="entry name" value="Pyr_redox_dim"/>
    <property type="match status" value="1"/>
</dbReference>
<dbReference type="PIRSF" id="PIRSF000350">
    <property type="entry name" value="Mercury_reductase_MerA"/>
    <property type="match status" value="1"/>
</dbReference>
<dbReference type="PRINTS" id="PR00368">
    <property type="entry name" value="FADPNR"/>
</dbReference>
<dbReference type="PRINTS" id="PR00411">
    <property type="entry name" value="PNDRDTASEI"/>
</dbReference>
<dbReference type="SUPFAM" id="SSF51905">
    <property type="entry name" value="FAD/NAD(P)-binding domain"/>
    <property type="match status" value="1"/>
</dbReference>
<dbReference type="SUPFAM" id="SSF55424">
    <property type="entry name" value="FAD/NAD-linked reductases, dimerisation (C-terminal) domain"/>
    <property type="match status" value="1"/>
</dbReference>
<comment type="function">
    <text evidence="1">Conversion of NADPH, generated by peripheral catabolic pathways, to NADH, which can enter the respiratory chain for energy generation.</text>
</comment>
<comment type="catalytic activity">
    <reaction evidence="1">
        <text>NAD(+) + NADPH = NADH + NADP(+)</text>
        <dbReference type="Rhea" id="RHEA:11692"/>
        <dbReference type="ChEBI" id="CHEBI:57540"/>
        <dbReference type="ChEBI" id="CHEBI:57783"/>
        <dbReference type="ChEBI" id="CHEBI:57945"/>
        <dbReference type="ChEBI" id="CHEBI:58349"/>
        <dbReference type="EC" id="1.6.1.1"/>
    </reaction>
</comment>
<comment type="cofactor">
    <cofactor evidence="1">
        <name>FAD</name>
        <dbReference type="ChEBI" id="CHEBI:57692"/>
    </cofactor>
    <text evidence="1">Binds 1 FAD per subunit.</text>
</comment>
<comment type="subcellular location">
    <subcellularLocation>
        <location evidence="1">Cytoplasm</location>
    </subcellularLocation>
</comment>
<comment type="similarity">
    <text evidence="1">Belongs to the class-I pyridine nucleotide-disulfide oxidoreductase family.</text>
</comment>
<accession>B1JQ50</accession>
<name>STHA_YERPY</name>